<organism>
    <name type="scientific">Drosophila erecta</name>
    <name type="common">Fruit fly</name>
    <dbReference type="NCBI Taxonomy" id="7220"/>
    <lineage>
        <taxon>Eukaryota</taxon>
        <taxon>Metazoa</taxon>
        <taxon>Ecdysozoa</taxon>
        <taxon>Arthropoda</taxon>
        <taxon>Hexapoda</taxon>
        <taxon>Insecta</taxon>
        <taxon>Pterygota</taxon>
        <taxon>Neoptera</taxon>
        <taxon>Endopterygota</taxon>
        <taxon>Diptera</taxon>
        <taxon>Brachycera</taxon>
        <taxon>Muscomorpha</taxon>
        <taxon>Ephydroidea</taxon>
        <taxon>Drosophilidae</taxon>
        <taxon>Drosophila</taxon>
        <taxon>Sophophora</taxon>
    </lineage>
</organism>
<dbReference type="EMBL" id="CH954177">
    <property type="protein sequence ID" value="EDV59832.1"/>
    <property type="molecule type" value="Genomic_DNA"/>
</dbReference>
<dbReference type="SMR" id="B3NB67"/>
<dbReference type="EnsemblMetazoa" id="FBtr0143252">
    <property type="protein sequence ID" value="FBpp0141744"/>
    <property type="gene ID" value="FBgn0115349"/>
</dbReference>
<dbReference type="EnsemblMetazoa" id="XM_001970737.3">
    <property type="protein sequence ID" value="XP_001970773.2"/>
    <property type="gene ID" value="LOC6541246"/>
</dbReference>
<dbReference type="GeneID" id="6541246"/>
<dbReference type="KEGG" id="der:6541246"/>
<dbReference type="CTD" id="35547"/>
<dbReference type="eggNOG" id="KOG2975">
    <property type="taxonomic scope" value="Eukaryota"/>
</dbReference>
<dbReference type="HOGENOM" id="CLU_027018_0_1_1"/>
<dbReference type="OMA" id="IEITNCF"/>
<dbReference type="OrthoDB" id="25498at2759"/>
<dbReference type="PhylomeDB" id="B3NB67"/>
<dbReference type="Proteomes" id="UP000008711">
    <property type="component" value="Unassembled WGS sequence"/>
</dbReference>
<dbReference type="GO" id="GO:0016282">
    <property type="term" value="C:eukaryotic 43S preinitiation complex"/>
    <property type="evidence" value="ECO:0007669"/>
    <property type="project" value="UniProtKB-UniRule"/>
</dbReference>
<dbReference type="GO" id="GO:0033290">
    <property type="term" value="C:eukaryotic 48S preinitiation complex"/>
    <property type="evidence" value="ECO:0007669"/>
    <property type="project" value="UniProtKB-UniRule"/>
</dbReference>
<dbReference type="GO" id="GO:0071541">
    <property type="term" value="C:eukaryotic translation initiation factor 3 complex, eIF3m"/>
    <property type="evidence" value="ECO:0007669"/>
    <property type="project" value="TreeGrafter"/>
</dbReference>
<dbReference type="GO" id="GO:0008237">
    <property type="term" value="F:metallopeptidase activity"/>
    <property type="evidence" value="ECO:0007669"/>
    <property type="project" value="InterPro"/>
</dbReference>
<dbReference type="GO" id="GO:0003743">
    <property type="term" value="F:translation initiation factor activity"/>
    <property type="evidence" value="ECO:0007669"/>
    <property type="project" value="UniProtKB-UniRule"/>
</dbReference>
<dbReference type="GO" id="GO:0031369">
    <property type="term" value="F:translation initiation factor binding"/>
    <property type="evidence" value="ECO:0007669"/>
    <property type="project" value="InterPro"/>
</dbReference>
<dbReference type="GO" id="GO:0001732">
    <property type="term" value="P:formation of cytoplasmic translation initiation complex"/>
    <property type="evidence" value="ECO:0007669"/>
    <property type="project" value="UniProtKB-UniRule"/>
</dbReference>
<dbReference type="CDD" id="cd08064">
    <property type="entry name" value="MPN_eIF3f"/>
    <property type="match status" value="1"/>
</dbReference>
<dbReference type="Gene3D" id="3.40.140.10">
    <property type="entry name" value="Cytidine Deaminase, domain 2"/>
    <property type="match status" value="1"/>
</dbReference>
<dbReference type="HAMAP" id="MF_03005">
    <property type="entry name" value="eIF3f"/>
    <property type="match status" value="1"/>
</dbReference>
<dbReference type="InterPro" id="IPR027531">
    <property type="entry name" value="eIF3f"/>
</dbReference>
<dbReference type="InterPro" id="IPR024969">
    <property type="entry name" value="EIF3F/CSN6-like_C"/>
</dbReference>
<dbReference type="InterPro" id="IPR000555">
    <property type="entry name" value="JAMM/MPN+_dom"/>
</dbReference>
<dbReference type="InterPro" id="IPR037518">
    <property type="entry name" value="MPN"/>
</dbReference>
<dbReference type="PANTHER" id="PTHR10540:SF6">
    <property type="entry name" value="EUKARYOTIC TRANSLATION INITIATION FACTOR 3 SUBUNIT F"/>
    <property type="match status" value="1"/>
</dbReference>
<dbReference type="PANTHER" id="PTHR10540">
    <property type="entry name" value="EUKARYOTIC TRANSLATION INITIATION FACTOR 3 SUBUNIT F-RELATED"/>
    <property type="match status" value="1"/>
</dbReference>
<dbReference type="Pfam" id="PF01398">
    <property type="entry name" value="JAB"/>
    <property type="match status" value="1"/>
</dbReference>
<dbReference type="Pfam" id="PF13012">
    <property type="entry name" value="MitMem_reg"/>
    <property type="match status" value="1"/>
</dbReference>
<dbReference type="SMART" id="SM00232">
    <property type="entry name" value="JAB_MPN"/>
    <property type="match status" value="1"/>
</dbReference>
<dbReference type="PROSITE" id="PS50249">
    <property type="entry name" value="MPN"/>
    <property type="match status" value="1"/>
</dbReference>
<accession>B3NB67</accession>
<reference key="1">
    <citation type="journal article" date="2007" name="Nature">
        <title>Evolution of genes and genomes on the Drosophila phylogeny.</title>
        <authorList>
            <consortium name="Drosophila 12 genomes consortium"/>
        </authorList>
    </citation>
    <scope>NUCLEOTIDE SEQUENCE [LARGE SCALE GENOMIC DNA]</scope>
    <source>
        <strain>Tucson 14021-0224.01</strain>
    </source>
</reference>
<keyword id="KW-0963">Cytoplasm</keyword>
<keyword id="KW-0396">Initiation factor</keyword>
<keyword id="KW-0648">Protein biosynthesis</keyword>
<sequence>MSRNLGMRAKVLIKPLVLFQIIDSYERRPKGDNQVIGTLLGRNKEGHFEITNCFTVPHKEHPEINRIDLDIAYASEILELNMLTYPNERVLGWFCTGKSVSRSASLLHDYYARECGEVQPLHLVVDATLKSQRLSTRLYCAVEIGVPGGTKGLMFSLVPLEISNGNSDLVALRSIEKQSLQQGTKQLDRFIPELVQVVDATRDIQQRLDLVLRYIKDVLDRKRKPDNVVGRALHAALTAVPVMDPDKFRLMFNTNLRDMLMAITLSTMIKTQLEISEKLSCMQDQ</sequence>
<feature type="chain" id="PRO_0000364300" description="Eukaryotic translation initiation factor 3 subunit F-2">
    <location>
        <begin position="1"/>
        <end position="285"/>
    </location>
</feature>
<feature type="domain" description="MPN" evidence="2">
    <location>
        <begin position="11"/>
        <end position="145"/>
    </location>
</feature>
<comment type="function">
    <text evidence="1">Component of the eukaryotic translation initiation factor 3 (eIF-3) complex, which is involved in protein synthesis of a specialized repertoire of mRNAs and, together with other initiation factors, stimulates binding of mRNA and methionyl-tRNAi to the 40S ribosome. The eIF-3 complex specifically targets and initiates translation of a subset of mRNAs involved in cell proliferation.</text>
</comment>
<comment type="subunit">
    <text evidence="1">Component of the eukaryotic translation initiation factor 3 (eIF-3) complex. The eIF-3 complex interacts with pix.</text>
</comment>
<comment type="subcellular location">
    <subcellularLocation>
        <location evidence="1">Cytoplasm</location>
    </subcellularLocation>
</comment>
<comment type="similarity">
    <text evidence="1">Belongs to the eIF-3 subunit F family.</text>
</comment>
<gene>
    <name evidence="1" type="primary">eIF3f2</name>
    <name evidence="1" type="synonym">eIF3-S5-2</name>
    <name type="ORF">GG23198</name>
</gene>
<proteinExistence type="inferred from homology"/>
<name>EI3F2_DROER</name>
<evidence type="ECO:0000255" key="1">
    <source>
        <dbReference type="HAMAP-Rule" id="MF_03005"/>
    </source>
</evidence>
<evidence type="ECO:0000255" key="2">
    <source>
        <dbReference type="PROSITE-ProRule" id="PRU01182"/>
    </source>
</evidence>
<protein>
    <recommendedName>
        <fullName evidence="1">Eukaryotic translation initiation factor 3 subunit F-2</fullName>
        <shortName evidence="1">eIF3f-2</shortName>
    </recommendedName>
    <alternativeName>
        <fullName evidence="1">Eukaryotic translation initiation factor 3 subunit 5-2</fullName>
    </alternativeName>
</protein>